<dbReference type="EMBL" id="CP000885">
    <property type="protein sequence ID" value="ABX44002.1"/>
    <property type="molecule type" value="Genomic_DNA"/>
</dbReference>
<dbReference type="RefSeq" id="WP_012201650.1">
    <property type="nucleotide sequence ID" value="NC_010001.1"/>
</dbReference>
<dbReference type="SMR" id="A9KJI2"/>
<dbReference type="STRING" id="357809.Cphy_3655"/>
<dbReference type="KEGG" id="cpy:Cphy_3655"/>
<dbReference type="eggNOG" id="COG0094">
    <property type="taxonomic scope" value="Bacteria"/>
</dbReference>
<dbReference type="HOGENOM" id="CLU_061015_2_1_9"/>
<dbReference type="OrthoDB" id="9806626at2"/>
<dbReference type="Proteomes" id="UP000000370">
    <property type="component" value="Chromosome"/>
</dbReference>
<dbReference type="GO" id="GO:1990904">
    <property type="term" value="C:ribonucleoprotein complex"/>
    <property type="evidence" value="ECO:0007669"/>
    <property type="project" value="UniProtKB-KW"/>
</dbReference>
<dbReference type="GO" id="GO:0005840">
    <property type="term" value="C:ribosome"/>
    <property type="evidence" value="ECO:0007669"/>
    <property type="project" value="UniProtKB-KW"/>
</dbReference>
<dbReference type="GO" id="GO:0019843">
    <property type="term" value="F:rRNA binding"/>
    <property type="evidence" value="ECO:0007669"/>
    <property type="project" value="UniProtKB-UniRule"/>
</dbReference>
<dbReference type="GO" id="GO:0003735">
    <property type="term" value="F:structural constituent of ribosome"/>
    <property type="evidence" value="ECO:0007669"/>
    <property type="project" value="InterPro"/>
</dbReference>
<dbReference type="GO" id="GO:0000049">
    <property type="term" value="F:tRNA binding"/>
    <property type="evidence" value="ECO:0007669"/>
    <property type="project" value="UniProtKB-UniRule"/>
</dbReference>
<dbReference type="GO" id="GO:0006412">
    <property type="term" value="P:translation"/>
    <property type="evidence" value="ECO:0007669"/>
    <property type="project" value="UniProtKB-UniRule"/>
</dbReference>
<dbReference type="FunFam" id="3.30.1440.10:FF:000001">
    <property type="entry name" value="50S ribosomal protein L5"/>
    <property type="match status" value="1"/>
</dbReference>
<dbReference type="Gene3D" id="3.30.1440.10">
    <property type="match status" value="1"/>
</dbReference>
<dbReference type="HAMAP" id="MF_01333_B">
    <property type="entry name" value="Ribosomal_uL5_B"/>
    <property type="match status" value="1"/>
</dbReference>
<dbReference type="InterPro" id="IPR002132">
    <property type="entry name" value="Ribosomal_uL5"/>
</dbReference>
<dbReference type="InterPro" id="IPR020930">
    <property type="entry name" value="Ribosomal_uL5_bac-type"/>
</dbReference>
<dbReference type="InterPro" id="IPR031309">
    <property type="entry name" value="Ribosomal_uL5_C"/>
</dbReference>
<dbReference type="InterPro" id="IPR020929">
    <property type="entry name" value="Ribosomal_uL5_CS"/>
</dbReference>
<dbReference type="InterPro" id="IPR022803">
    <property type="entry name" value="Ribosomal_uL5_dom_sf"/>
</dbReference>
<dbReference type="InterPro" id="IPR031310">
    <property type="entry name" value="Ribosomal_uL5_N"/>
</dbReference>
<dbReference type="NCBIfam" id="NF000585">
    <property type="entry name" value="PRK00010.1"/>
    <property type="match status" value="1"/>
</dbReference>
<dbReference type="PANTHER" id="PTHR11994">
    <property type="entry name" value="60S RIBOSOMAL PROTEIN L11-RELATED"/>
    <property type="match status" value="1"/>
</dbReference>
<dbReference type="Pfam" id="PF00281">
    <property type="entry name" value="Ribosomal_L5"/>
    <property type="match status" value="1"/>
</dbReference>
<dbReference type="Pfam" id="PF00673">
    <property type="entry name" value="Ribosomal_L5_C"/>
    <property type="match status" value="1"/>
</dbReference>
<dbReference type="PIRSF" id="PIRSF002161">
    <property type="entry name" value="Ribosomal_L5"/>
    <property type="match status" value="1"/>
</dbReference>
<dbReference type="SUPFAM" id="SSF55282">
    <property type="entry name" value="RL5-like"/>
    <property type="match status" value="1"/>
</dbReference>
<dbReference type="PROSITE" id="PS00358">
    <property type="entry name" value="RIBOSOMAL_L5"/>
    <property type="match status" value="1"/>
</dbReference>
<sequence length="179" mass="20184">MTRLKEIYKNEIMAGMQKKFGYKNEMQIPKLDKIVINMGVGEAKDNAKALEAAVKDMEIIAGQKAVITKARKSVANFKLREGVAIGCKVTLRGEKMYEFADRLINLALPRVRDFRGVNPNAFDGRGNYALGVKEQLIFPEIEYDKVDKVRGMDVIFVTTAKTDEEARELLTLFGMPFSK</sequence>
<organism>
    <name type="scientific">Lachnoclostridium phytofermentans (strain ATCC 700394 / DSM 18823 / ISDg)</name>
    <name type="common">Clostridium phytofermentans</name>
    <dbReference type="NCBI Taxonomy" id="357809"/>
    <lineage>
        <taxon>Bacteria</taxon>
        <taxon>Bacillati</taxon>
        <taxon>Bacillota</taxon>
        <taxon>Clostridia</taxon>
        <taxon>Lachnospirales</taxon>
        <taxon>Lachnospiraceae</taxon>
    </lineage>
</organism>
<proteinExistence type="inferred from homology"/>
<comment type="function">
    <text evidence="1">This is one of the proteins that bind and probably mediate the attachment of the 5S RNA into the large ribosomal subunit, where it forms part of the central protuberance. In the 70S ribosome it contacts protein S13 of the 30S subunit (bridge B1b), connecting the 2 subunits; this bridge is implicated in subunit movement. Contacts the P site tRNA; the 5S rRNA and some of its associated proteins might help stabilize positioning of ribosome-bound tRNAs.</text>
</comment>
<comment type="subunit">
    <text evidence="1">Part of the 50S ribosomal subunit; part of the 5S rRNA/L5/L18/L25 subcomplex. Contacts the 5S rRNA and the P site tRNA. Forms a bridge to the 30S subunit in the 70S ribosome.</text>
</comment>
<comment type="similarity">
    <text evidence="1">Belongs to the universal ribosomal protein uL5 family.</text>
</comment>
<name>RL5_LACP7</name>
<feature type="chain" id="PRO_1000086585" description="Large ribosomal subunit protein uL5">
    <location>
        <begin position="1"/>
        <end position="179"/>
    </location>
</feature>
<keyword id="KW-1185">Reference proteome</keyword>
<keyword id="KW-0687">Ribonucleoprotein</keyword>
<keyword id="KW-0689">Ribosomal protein</keyword>
<keyword id="KW-0694">RNA-binding</keyword>
<keyword id="KW-0699">rRNA-binding</keyword>
<keyword id="KW-0820">tRNA-binding</keyword>
<protein>
    <recommendedName>
        <fullName evidence="1">Large ribosomal subunit protein uL5</fullName>
    </recommendedName>
    <alternativeName>
        <fullName evidence="2">50S ribosomal protein L5</fullName>
    </alternativeName>
</protein>
<gene>
    <name evidence="1" type="primary">rplE</name>
    <name type="ordered locus">Cphy_3655</name>
</gene>
<reference key="1">
    <citation type="submission" date="2007-11" db="EMBL/GenBank/DDBJ databases">
        <title>Complete genome sequence of Clostridium phytofermentans ISDg.</title>
        <authorList>
            <person name="Leschine S.B."/>
            <person name="Warnick T.A."/>
            <person name="Blanchard J.L."/>
            <person name="Schnell D.J."/>
            <person name="Petit E.L."/>
            <person name="LaTouf W.G."/>
            <person name="Copeland A."/>
            <person name="Lucas S."/>
            <person name="Lapidus A."/>
            <person name="Barry K."/>
            <person name="Glavina del Rio T."/>
            <person name="Dalin E."/>
            <person name="Tice H."/>
            <person name="Pitluck S."/>
            <person name="Kiss H."/>
            <person name="Brettin T."/>
            <person name="Bruce D."/>
            <person name="Detter J.C."/>
            <person name="Han C."/>
            <person name="Kuske C."/>
            <person name="Schmutz J."/>
            <person name="Larimer F."/>
            <person name="Land M."/>
            <person name="Hauser L."/>
            <person name="Kyrpides N."/>
            <person name="Kim E.A."/>
            <person name="Richardson P."/>
        </authorList>
    </citation>
    <scope>NUCLEOTIDE SEQUENCE [LARGE SCALE GENOMIC DNA]</scope>
    <source>
        <strain>ATCC 700394 / DSM 18823 / ISDg</strain>
    </source>
</reference>
<evidence type="ECO:0000255" key="1">
    <source>
        <dbReference type="HAMAP-Rule" id="MF_01333"/>
    </source>
</evidence>
<evidence type="ECO:0000305" key="2"/>
<accession>A9KJI2</accession>